<keyword id="KW-1185">Reference proteome</keyword>
<name>Y150_ARCFU</name>
<proteinExistence type="predicted"/>
<accession>O30087</accession>
<reference key="1">
    <citation type="journal article" date="1997" name="Nature">
        <title>The complete genome sequence of the hyperthermophilic, sulphate-reducing archaeon Archaeoglobus fulgidus.</title>
        <authorList>
            <person name="Klenk H.-P."/>
            <person name="Clayton R.A."/>
            <person name="Tomb J.-F."/>
            <person name="White O."/>
            <person name="Nelson K.E."/>
            <person name="Ketchum K.A."/>
            <person name="Dodson R.J."/>
            <person name="Gwinn M.L."/>
            <person name="Hickey E.K."/>
            <person name="Peterson J.D."/>
            <person name="Richardson D.L."/>
            <person name="Kerlavage A.R."/>
            <person name="Graham D.E."/>
            <person name="Kyrpides N.C."/>
            <person name="Fleischmann R.D."/>
            <person name="Quackenbush J."/>
            <person name="Lee N.H."/>
            <person name="Sutton G.G."/>
            <person name="Gill S.R."/>
            <person name="Kirkness E.F."/>
            <person name="Dougherty B.A."/>
            <person name="McKenney K."/>
            <person name="Adams M.D."/>
            <person name="Loftus B.J."/>
            <person name="Peterson S.N."/>
            <person name="Reich C.I."/>
            <person name="McNeil L.K."/>
            <person name="Badger J.H."/>
            <person name="Glodek A."/>
            <person name="Zhou L."/>
            <person name="Overbeek R."/>
            <person name="Gocayne J.D."/>
            <person name="Weidman J.F."/>
            <person name="McDonald L.A."/>
            <person name="Utterback T.R."/>
            <person name="Cotton M.D."/>
            <person name="Spriggs T."/>
            <person name="Artiach P."/>
            <person name="Kaine B.P."/>
            <person name="Sykes S.M."/>
            <person name="Sadow P.W."/>
            <person name="D'Andrea K.P."/>
            <person name="Bowman C."/>
            <person name="Fujii C."/>
            <person name="Garland S.A."/>
            <person name="Mason T.M."/>
            <person name="Olsen G.J."/>
            <person name="Fraser C.M."/>
            <person name="Smith H.O."/>
            <person name="Woese C.R."/>
            <person name="Venter J.C."/>
        </authorList>
    </citation>
    <scope>NUCLEOTIDE SEQUENCE [LARGE SCALE GENOMIC DNA]</scope>
    <source>
        <strain>ATCC 49558 / DSM 4304 / JCM 9628 / NBRC 100126 / VC-16</strain>
    </source>
</reference>
<dbReference type="EMBL" id="AE000782">
    <property type="protein sequence ID" value="AAB91087.1"/>
    <property type="molecule type" value="Genomic_DNA"/>
</dbReference>
<dbReference type="PIR" id="F69268">
    <property type="entry name" value="F69268"/>
</dbReference>
<dbReference type="PaxDb" id="224325-AF_0150"/>
<dbReference type="EnsemblBacteria" id="AAB91087">
    <property type="protein sequence ID" value="AAB91087"/>
    <property type="gene ID" value="AF_0150"/>
</dbReference>
<dbReference type="KEGG" id="afu:AF_0150"/>
<dbReference type="HOGENOM" id="CLU_2447485_0_0_2"/>
<dbReference type="Proteomes" id="UP000002199">
    <property type="component" value="Chromosome"/>
</dbReference>
<protein>
    <recommendedName>
        <fullName>Uncharacterized protein AF_0150</fullName>
    </recommendedName>
</protein>
<feature type="chain" id="PRO_0000127840" description="Uncharacterized protein AF_0150">
    <location>
        <begin position="1"/>
        <end position="89"/>
    </location>
</feature>
<sequence length="89" mass="9821">MQWVVMPLFSSNIFITVSSSSSSRFSRSSSVPFLSEFASACFSGIFCFGKSCFPTFLSFSDRNGDDVGGCVCGHWRHADSVINSMRLLR</sequence>
<gene>
    <name type="ordered locus">AF_0150</name>
</gene>
<organism>
    <name type="scientific">Archaeoglobus fulgidus (strain ATCC 49558 / DSM 4304 / JCM 9628 / NBRC 100126 / VC-16)</name>
    <dbReference type="NCBI Taxonomy" id="224325"/>
    <lineage>
        <taxon>Archaea</taxon>
        <taxon>Methanobacteriati</taxon>
        <taxon>Methanobacteriota</taxon>
        <taxon>Archaeoglobi</taxon>
        <taxon>Archaeoglobales</taxon>
        <taxon>Archaeoglobaceae</taxon>
        <taxon>Archaeoglobus</taxon>
    </lineage>
</organism>